<comment type="function">
    <text evidence="1">Catalyzes the NADPH-dependent reduction of L-glutamate 5-phosphate into L-glutamate 5-semialdehyde and phosphate. The product spontaneously undergoes cyclization to form 1-pyrroline-5-carboxylate.</text>
</comment>
<comment type="catalytic activity">
    <reaction evidence="1">
        <text>L-glutamate 5-semialdehyde + phosphate + NADP(+) = L-glutamyl 5-phosphate + NADPH + H(+)</text>
        <dbReference type="Rhea" id="RHEA:19541"/>
        <dbReference type="ChEBI" id="CHEBI:15378"/>
        <dbReference type="ChEBI" id="CHEBI:43474"/>
        <dbReference type="ChEBI" id="CHEBI:57783"/>
        <dbReference type="ChEBI" id="CHEBI:58066"/>
        <dbReference type="ChEBI" id="CHEBI:58274"/>
        <dbReference type="ChEBI" id="CHEBI:58349"/>
        <dbReference type="EC" id="1.2.1.41"/>
    </reaction>
</comment>
<comment type="pathway">
    <text evidence="1">Amino-acid biosynthesis; L-proline biosynthesis; L-glutamate 5-semialdehyde from L-glutamate: step 2/2.</text>
</comment>
<comment type="subcellular location">
    <subcellularLocation>
        <location evidence="1">Cytoplasm</location>
    </subcellularLocation>
</comment>
<comment type="similarity">
    <text evidence="1">Belongs to the gamma-glutamyl phosphate reductase family.</text>
</comment>
<evidence type="ECO:0000255" key="1">
    <source>
        <dbReference type="HAMAP-Rule" id="MF_00412"/>
    </source>
</evidence>
<keyword id="KW-0028">Amino-acid biosynthesis</keyword>
<keyword id="KW-0963">Cytoplasm</keyword>
<keyword id="KW-0521">NADP</keyword>
<keyword id="KW-0560">Oxidoreductase</keyword>
<keyword id="KW-0641">Proline biosynthesis</keyword>
<keyword id="KW-1185">Reference proteome</keyword>
<proteinExistence type="inferred from homology"/>
<reference key="1">
    <citation type="submission" date="2009-06" db="EMBL/GenBank/DDBJ databases">
        <title>Complete sequence of Thermotogales bacterium TBF 19.5.1.</title>
        <authorList>
            <consortium name="US DOE Joint Genome Institute"/>
            <person name="Lucas S."/>
            <person name="Copeland A."/>
            <person name="Lapidus A."/>
            <person name="Glavina del Rio T."/>
            <person name="Tice H."/>
            <person name="Bruce D."/>
            <person name="Goodwin L."/>
            <person name="Pitluck S."/>
            <person name="Chertkov O."/>
            <person name="Brettin T."/>
            <person name="Detter J.C."/>
            <person name="Han C."/>
            <person name="Schmutz J."/>
            <person name="Larimer F."/>
            <person name="Land M."/>
            <person name="Hauser L."/>
            <person name="Kyrpides N."/>
            <person name="Ovchinnikova G."/>
            <person name="Noll K."/>
        </authorList>
    </citation>
    <scope>NUCLEOTIDE SEQUENCE [LARGE SCALE GENOMIC DNA]</scope>
    <source>
        <strain>ATCC BAA-1733 / DSM 21960 / TBF 19.5.1</strain>
    </source>
</reference>
<name>PROA_KOSOT</name>
<gene>
    <name evidence="1" type="primary">proA</name>
    <name type="ordered locus">Kole_1418</name>
</gene>
<accession>C5CE09</accession>
<sequence length="414" mass="45486">MEELIQKARSVKKASIKLQSVSTVQKNEALLQIGAALKRKEDAILKANKMDVKEARDKGIRDSLIDRLALNQKRIDDMIQSCHRVAGLKDPVGEVIASWVQSDGLRISKVRVPIGAIGIIYESRPNVTVEASILALKTGNSILLRGGSDAFHSNMAIVKAIKEGLSRSSLPVESIEIVESTDRKLVEQMLKLREYLSLIVPRGSNRLIQYVVENSSIPVLETGVGNCHIFVDDSADLEKALEIVDNAKTQRPGTCNAVETLLVHQSIAAAFLPMMADRLSKKGVEIRGCSQTQKFIKVKPATDSDWETEFLDLILAVRVVNSLDEAIAHIQKYSSGHSEAILTENYFNAKKFVENIDAAAVYVNASTRFTDGGQFGFGGEIGISTQRLHARGPVGLEGLTTYKYVILGDYNVRR</sequence>
<dbReference type="EC" id="1.2.1.41" evidence="1"/>
<dbReference type="EMBL" id="CP001634">
    <property type="protein sequence ID" value="ACR80111.1"/>
    <property type="molecule type" value="Genomic_DNA"/>
</dbReference>
<dbReference type="RefSeq" id="WP_015868758.1">
    <property type="nucleotide sequence ID" value="NC_012785.1"/>
</dbReference>
<dbReference type="SMR" id="C5CE09"/>
<dbReference type="STRING" id="521045.Kole_1418"/>
<dbReference type="KEGG" id="kol:Kole_1418"/>
<dbReference type="eggNOG" id="COG0014">
    <property type="taxonomic scope" value="Bacteria"/>
</dbReference>
<dbReference type="HOGENOM" id="CLU_030231_0_0_0"/>
<dbReference type="OrthoDB" id="9809970at2"/>
<dbReference type="UniPathway" id="UPA00098">
    <property type="reaction ID" value="UER00360"/>
</dbReference>
<dbReference type="Proteomes" id="UP000002382">
    <property type="component" value="Chromosome"/>
</dbReference>
<dbReference type="GO" id="GO:0005737">
    <property type="term" value="C:cytoplasm"/>
    <property type="evidence" value="ECO:0007669"/>
    <property type="project" value="UniProtKB-SubCell"/>
</dbReference>
<dbReference type="GO" id="GO:0004350">
    <property type="term" value="F:glutamate-5-semialdehyde dehydrogenase activity"/>
    <property type="evidence" value="ECO:0007669"/>
    <property type="project" value="UniProtKB-UniRule"/>
</dbReference>
<dbReference type="GO" id="GO:0050661">
    <property type="term" value="F:NADP binding"/>
    <property type="evidence" value="ECO:0007669"/>
    <property type="project" value="InterPro"/>
</dbReference>
<dbReference type="GO" id="GO:0055129">
    <property type="term" value="P:L-proline biosynthetic process"/>
    <property type="evidence" value="ECO:0007669"/>
    <property type="project" value="UniProtKB-UniRule"/>
</dbReference>
<dbReference type="CDD" id="cd07079">
    <property type="entry name" value="ALDH_F18-19_ProA-GPR"/>
    <property type="match status" value="1"/>
</dbReference>
<dbReference type="FunFam" id="3.40.309.10:FF:000006">
    <property type="entry name" value="Gamma-glutamyl phosphate reductase"/>
    <property type="match status" value="1"/>
</dbReference>
<dbReference type="Gene3D" id="3.40.605.10">
    <property type="entry name" value="Aldehyde Dehydrogenase, Chain A, domain 1"/>
    <property type="match status" value="1"/>
</dbReference>
<dbReference type="Gene3D" id="3.40.309.10">
    <property type="entry name" value="Aldehyde Dehydrogenase, Chain A, domain 2"/>
    <property type="match status" value="1"/>
</dbReference>
<dbReference type="HAMAP" id="MF_00412">
    <property type="entry name" value="ProA"/>
    <property type="match status" value="1"/>
</dbReference>
<dbReference type="InterPro" id="IPR016161">
    <property type="entry name" value="Ald_DH/histidinol_DH"/>
</dbReference>
<dbReference type="InterPro" id="IPR016163">
    <property type="entry name" value="Ald_DH_C"/>
</dbReference>
<dbReference type="InterPro" id="IPR016162">
    <property type="entry name" value="Ald_DH_N"/>
</dbReference>
<dbReference type="InterPro" id="IPR015590">
    <property type="entry name" value="Aldehyde_DH_dom"/>
</dbReference>
<dbReference type="InterPro" id="IPR020593">
    <property type="entry name" value="G-glutamylP_reductase_CS"/>
</dbReference>
<dbReference type="InterPro" id="IPR012134">
    <property type="entry name" value="Glu-5-SA_DH"/>
</dbReference>
<dbReference type="InterPro" id="IPR000965">
    <property type="entry name" value="GPR_dom"/>
</dbReference>
<dbReference type="NCBIfam" id="NF001221">
    <property type="entry name" value="PRK00197.1"/>
    <property type="match status" value="1"/>
</dbReference>
<dbReference type="NCBIfam" id="TIGR00407">
    <property type="entry name" value="proA"/>
    <property type="match status" value="1"/>
</dbReference>
<dbReference type="PANTHER" id="PTHR11063:SF8">
    <property type="entry name" value="DELTA-1-PYRROLINE-5-CARBOXYLATE SYNTHASE"/>
    <property type="match status" value="1"/>
</dbReference>
<dbReference type="PANTHER" id="PTHR11063">
    <property type="entry name" value="GLUTAMATE SEMIALDEHYDE DEHYDROGENASE"/>
    <property type="match status" value="1"/>
</dbReference>
<dbReference type="Pfam" id="PF00171">
    <property type="entry name" value="Aldedh"/>
    <property type="match status" value="2"/>
</dbReference>
<dbReference type="PIRSF" id="PIRSF000151">
    <property type="entry name" value="GPR"/>
    <property type="match status" value="1"/>
</dbReference>
<dbReference type="SUPFAM" id="SSF53720">
    <property type="entry name" value="ALDH-like"/>
    <property type="match status" value="1"/>
</dbReference>
<dbReference type="PROSITE" id="PS01223">
    <property type="entry name" value="PROA"/>
    <property type="match status" value="1"/>
</dbReference>
<organism>
    <name type="scientific">Kosmotoga olearia (strain ATCC BAA-1733 / DSM 21960 / TBF 19.5.1)</name>
    <dbReference type="NCBI Taxonomy" id="521045"/>
    <lineage>
        <taxon>Bacteria</taxon>
        <taxon>Thermotogati</taxon>
        <taxon>Thermotogota</taxon>
        <taxon>Thermotogae</taxon>
        <taxon>Kosmotogales</taxon>
        <taxon>Kosmotogaceae</taxon>
        <taxon>Kosmotoga</taxon>
    </lineage>
</organism>
<feature type="chain" id="PRO_1000205999" description="Gamma-glutamyl phosphate reductase">
    <location>
        <begin position="1"/>
        <end position="414"/>
    </location>
</feature>
<protein>
    <recommendedName>
        <fullName evidence="1">Gamma-glutamyl phosphate reductase</fullName>
        <shortName evidence="1">GPR</shortName>
        <ecNumber evidence="1">1.2.1.41</ecNumber>
    </recommendedName>
    <alternativeName>
        <fullName evidence="1">Glutamate-5-semialdehyde dehydrogenase</fullName>
    </alternativeName>
    <alternativeName>
        <fullName evidence="1">Glutamyl-gamma-semialdehyde dehydrogenase</fullName>
        <shortName evidence="1">GSA dehydrogenase</shortName>
    </alternativeName>
</protein>